<sequence length="271" mass="30266">MDNRPIGLLDSGVGGLTVARELLRQLPNEEIVYIGDTRRAPYGPRSREQIIAFTWDMVNFLLSKNVKMIVMACNTATAMTLEIVKEELDIPVIGVILPGASSAIQKTKTNKIGVIATQASIRSDEYHKTIARKSSAIEVLSLACPKFVSIVESNEMESEIAKRVVSESLAPLVGKIDTLILGCTHYPLLRSLIQETMGKEVRLIDSGAEAVRDISVLLNYFEINAHERKEYQHCFYTTAGVNSFREIAEKWLNIGHLHIEHAEIENFNKEK</sequence>
<name>MURI_LACLS</name>
<reference key="1">
    <citation type="journal article" date="2006" name="Proc. Natl. Acad. Sci. U.S.A.">
        <title>Comparative genomics of the lactic acid bacteria.</title>
        <authorList>
            <person name="Makarova K.S."/>
            <person name="Slesarev A."/>
            <person name="Wolf Y.I."/>
            <person name="Sorokin A."/>
            <person name="Mirkin B."/>
            <person name="Koonin E.V."/>
            <person name="Pavlov A."/>
            <person name="Pavlova N."/>
            <person name="Karamychev V."/>
            <person name="Polouchine N."/>
            <person name="Shakhova V."/>
            <person name="Grigoriev I."/>
            <person name="Lou Y."/>
            <person name="Rohksar D."/>
            <person name="Lucas S."/>
            <person name="Huang K."/>
            <person name="Goodstein D.M."/>
            <person name="Hawkins T."/>
            <person name="Plengvidhya V."/>
            <person name="Welker D."/>
            <person name="Hughes J."/>
            <person name="Goh Y."/>
            <person name="Benson A."/>
            <person name="Baldwin K."/>
            <person name="Lee J.-H."/>
            <person name="Diaz-Muniz I."/>
            <person name="Dosti B."/>
            <person name="Smeianov V."/>
            <person name="Wechter W."/>
            <person name="Barabote R."/>
            <person name="Lorca G."/>
            <person name="Altermann E."/>
            <person name="Barrangou R."/>
            <person name="Ganesan B."/>
            <person name="Xie Y."/>
            <person name="Rawsthorne H."/>
            <person name="Tamir D."/>
            <person name="Parker C."/>
            <person name="Breidt F."/>
            <person name="Broadbent J.R."/>
            <person name="Hutkins R."/>
            <person name="O'Sullivan D."/>
            <person name="Steele J."/>
            <person name="Unlu G."/>
            <person name="Saier M.H. Jr."/>
            <person name="Klaenhammer T."/>
            <person name="Richardson P."/>
            <person name="Kozyavkin S."/>
            <person name="Weimer B.C."/>
            <person name="Mills D.A."/>
        </authorList>
    </citation>
    <scope>NUCLEOTIDE SEQUENCE [LARGE SCALE GENOMIC DNA]</scope>
    <source>
        <strain>SK11</strain>
    </source>
</reference>
<feature type="chain" id="PRO_1000047578" description="Glutamate racemase">
    <location>
        <begin position="1"/>
        <end position="271"/>
    </location>
</feature>
<feature type="active site" description="Proton donor/acceptor" evidence="1">
    <location>
        <position position="73"/>
    </location>
</feature>
<feature type="active site" description="Proton donor/acceptor" evidence="1">
    <location>
        <position position="183"/>
    </location>
</feature>
<feature type="binding site" evidence="1">
    <location>
        <begin position="10"/>
        <end position="11"/>
    </location>
    <ligand>
        <name>substrate</name>
    </ligand>
</feature>
<feature type="binding site" evidence="1">
    <location>
        <begin position="42"/>
        <end position="43"/>
    </location>
    <ligand>
        <name>substrate</name>
    </ligand>
</feature>
<feature type="binding site" evidence="1">
    <location>
        <begin position="74"/>
        <end position="75"/>
    </location>
    <ligand>
        <name>substrate</name>
    </ligand>
</feature>
<feature type="binding site" evidence="1">
    <location>
        <begin position="184"/>
        <end position="185"/>
    </location>
    <ligand>
        <name>substrate</name>
    </ligand>
</feature>
<organism>
    <name type="scientific">Lactococcus lactis subsp. cremoris (strain SK11)</name>
    <dbReference type="NCBI Taxonomy" id="272622"/>
    <lineage>
        <taxon>Bacteria</taxon>
        <taxon>Bacillati</taxon>
        <taxon>Bacillota</taxon>
        <taxon>Bacilli</taxon>
        <taxon>Lactobacillales</taxon>
        <taxon>Streptococcaceae</taxon>
        <taxon>Lactococcus</taxon>
        <taxon>Lactococcus cremoris subsp. cremoris</taxon>
    </lineage>
</organism>
<proteinExistence type="inferred from homology"/>
<evidence type="ECO:0000255" key="1">
    <source>
        <dbReference type="HAMAP-Rule" id="MF_00258"/>
    </source>
</evidence>
<dbReference type="EC" id="5.1.1.3" evidence="1"/>
<dbReference type="EMBL" id="CP000425">
    <property type="protein sequence ID" value="ABJ72919.1"/>
    <property type="molecule type" value="Genomic_DNA"/>
</dbReference>
<dbReference type="SMR" id="Q02YQ3"/>
<dbReference type="KEGG" id="llc:LACR_1403"/>
<dbReference type="HOGENOM" id="CLU_052344_0_2_9"/>
<dbReference type="UniPathway" id="UPA00219"/>
<dbReference type="Proteomes" id="UP000000240">
    <property type="component" value="Chromosome"/>
</dbReference>
<dbReference type="GO" id="GO:0008881">
    <property type="term" value="F:glutamate racemase activity"/>
    <property type="evidence" value="ECO:0007669"/>
    <property type="project" value="UniProtKB-UniRule"/>
</dbReference>
<dbReference type="GO" id="GO:0071555">
    <property type="term" value="P:cell wall organization"/>
    <property type="evidence" value="ECO:0007669"/>
    <property type="project" value="UniProtKB-KW"/>
</dbReference>
<dbReference type="GO" id="GO:0009252">
    <property type="term" value="P:peptidoglycan biosynthetic process"/>
    <property type="evidence" value="ECO:0007669"/>
    <property type="project" value="UniProtKB-UniRule"/>
</dbReference>
<dbReference type="GO" id="GO:0008360">
    <property type="term" value="P:regulation of cell shape"/>
    <property type="evidence" value="ECO:0007669"/>
    <property type="project" value="UniProtKB-KW"/>
</dbReference>
<dbReference type="FunFam" id="3.40.50.1860:FF:000002">
    <property type="entry name" value="Glutamate racemase"/>
    <property type="match status" value="1"/>
</dbReference>
<dbReference type="Gene3D" id="3.40.50.1860">
    <property type="match status" value="2"/>
</dbReference>
<dbReference type="HAMAP" id="MF_00258">
    <property type="entry name" value="Glu_racemase"/>
    <property type="match status" value="1"/>
</dbReference>
<dbReference type="InterPro" id="IPR015942">
    <property type="entry name" value="Asp/Glu/hydantoin_racemase"/>
</dbReference>
<dbReference type="InterPro" id="IPR001920">
    <property type="entry name" value="Asp/Glu_race"/>
</dbReference>
<dbReference type="InterPro" id="IPR018187">
    <property type="entry name" value="Asp/Glu_racemase_AS_1"/>
</dbReference>
<dbReference type="InterPro" id="IPR033134">
    <property type="entry name" value="Asp/Glu_racemase_AS_2"/>
</dbReference>
<dbReference type="InterPro" id="IPR004391">
    <property type="entry name" value="Glu_race"/>
</dbReference>
<dbReference type="NCBIfam" id="TIGR00067">
    <property type="entry name" value="glut_race"/>
    <property type="match status" value="1"/>
</dbReference>
<dbReference type="NCBIfam" id="NF002035">
    <property type="entry name" value="PRK00865.1-3"/>
    <property type="match status" value="1"/>
</dbReference>
<dbReference type="PANTHER" id="PTHR21198">
    <property type="entry name" value="GLUTAMATE RACEMASE"/>
    <property type="match status" value="1"/>
</dbReference>
<dbReference type="PANTHER" id="PTHR21198:SF2">
    <property type="entry name" value="GLUTAMATE RACEMASE"/>
    <property type="match status" value="1"/>
</dbReference>
<dbReference type="Pfam" id="PF01177">
    <property type="entry name" value="Asp_Glu_race"/>
    <property type="match status" value="1"/>
</dbReference>
<dbReference type="SUPFAM" id="SSF53681">
    <property type="entry name" value="Aspartate/glutamate racemase"/>
    <property type="match status" value="2"/>
</dbReference>
<dbReference type="PROSITE" id="PS00923">
    <property type="entry name" value="ASP_GLU_RACEMASE_1"/>
    <property type="match status" value="1"/>
</dbReference>
<dbReference type="PROSITE" id="PS00924">
    <property type="entry name" value="ASP_GLU_RACEMASE_2"/>
    <property type="match status" value="1"/>
</dbReference>
<comment type="function">
    <text evidence="1">Provides the (R)-glutamate required for cell wall biosynthesis.</text>
</comment>
<comment type="catalytic activity">
    <reaction evidence="1">
        <text>L-glutamate = D-glutamate</text>
        <dbReference type="Rhea" id="RHEA:12813"/>
        <dbReference type="ChEBI" id="CHEBI:29985"/>
        <dbReference type="ChEBI" id="CHEBI:29986"/>
        <dbReference type="EC" id="5.1.1.3"/>
    </reaction>
</comment>
<comment type="pathway">
    <text evidence="1">Cell wall biogenesis; peptidoglycan biosynthesis.</text>
</comment>
<comment type="similarity">
    <text evidence="1">Belongs to the aspartate/glutamate racemases family.</text>
</comment>
<protein>
    <recommendedName>
        <fullName evidence="1">Glutamate racemase</fullName>
        <ecNumber evidence="1">5.1.1.3</ecNumber>
    </recommendedName>
</protein>
<accession>Q02YQ3</accession>
<gene>
    <name evidence="1" type="primary">murI</name>
    <name type="ordered locus">LACR_1403</name>
</gene>
<keyword id="KW-0133">Cell shape</keyword>
<keyword id="KW-0961">Cell wall biogenesis/degradation</keyword>
<keyword id="KW-0413">Isomerase</keyword>
<keyword id="KW-0573">Peptidoglycan synthesis</keyword>